<gene>
    <name evidence="1" type="primary">glyS</name>
    <name type="ordered locus">Daro_3535</name>
</gene>
<dbReference type="EC" id="6.1.1.14" evidence="1"/>
<dbReference type="EMBL" id="CP000089">
    <property type="protein sequence ID" value="AAZ48264.1"/>
    <property type="molecule type" value="Genomic_DNA"/>
</dbReference>
<dbReference type="SMR" id="Q47A67"/>
<dbReference type="STRING" id="159087.Daro_3535"/>
<dbReference type="KEGG" id="dar:Daro_3535"/>
<dbReference type="eggNOG" id="COG0751">
    <property type="taxonomic scope" value="Bacteria"/>
</dbReference>
<dbReference type="HOGENOM" id="CLU_007220_2_2_4"/>
<dbReference type="OrthoDB" id="9775440at2"/>
<dbReference type="GO" id="GO:0005829">
    <property type="term" value="C:cytosol"/>
    <property type="evidence" value="ECO:0007669"/>
    <property type="project" value="TreeGrafter"/>
</dbReference>
<dbReference type="GO" id="GO:0004814">
    <property type="term" value="F:arginine-tRNA ligase activity"/>
    <property type="evidence" value="ECO:0007669"/>
    <property type="project" value="InterPro"/>
</dbReference>
<dbReference type="GO" id="GO:0005524">
    <property type="term" value="F:ATP binding"/>
    <property type="evidence" value="ECO:0007669"/>
    <property type="project" value="UniProtKB-UniRule"/>
</dbReference>
<dbReference type="GO" id="GO:0004820">
    <property type="term" value="F:glycine-tRNA ligase activity"/>
    <property type="evidence" value="ECO:0007669"/>
    <property type="project" value="UniProtKB-UniRule"/>
</dbReference>
<dbReference type="GO" id="GO:0006420">
    <property type="term" value="P:arginyl-tRNA aminoacylation"/>
    <property type="evidence" value="ECO:0007669"/>
    <property type="project" value="InterPro"/>
</dbReference>
<dbReference type="GO" id="GO:0006426">
    <property type="term" value="P:glycyl-tRNA aminoacylation"/>
    <property type="evidence" value="ECO:0007669"/>
    <property type="project" value="UniProtKB-UniRule"/>
</dbReference>
<dbReference type="HAMAP" id="MF_00255">
    <property type="entry name" value="Gly_tRNA_synth_beta"/>
    <property type="match status" value="1"/>
</dbReference>
<dbReference type="InterPro" id="IPR008909">
    <property type="entry name" value="DALR_anticod-bd"/>
</dbReference>
<dbReference type="InterPro" id="IPR015944">
    <property type="entry name" value="Gly-tRNA-synth_bsu"/>
</dbReference>
<dbReference type="InterPro" id="IPR006194">
    <property type="entry name" value="Gly-tRNA-synth_heterodimer"/>
</dbReference>
<dbReference type="NCBIfam" id="TIGR00211">
    <property type="entry name" value="glyS"/>
    <property type="match status" value="1"/>
</dbReference>
<dbReference type="PANTHER" id="PTHR30075:SF2">
    <property type="entry name" value="GLYCINE--TRNA LIGASE, CHLOROPLASTIC_MITOCHONDRIAL 2"/>
    <property type="match status" value="1"/>
</dbReference>
<dbReference type="PANTHER" id="PTHR30075">
    <property type="entry name" value="GLYCYL-TRNA SYNTHETASE"/>
    <property type="match status" value="1"/>
</dbReference>
<dbReference type="Pfam" id="PF05746">
    <property type="entry name" value="DALR_1"/>
    <property type="match status" value="1"/>
</dbReference>
<dbReference type="Pfam" id="PF02092">
    <property type="entry name" value="tRNA_synt_2f"/>
    <property type="match status" value="1"/>
</dbReference>
<dbReference type="PRINTS" id="PR01045">
    <property type="entry name" value="TRNASYNTHGB"/>
</dbReference>
<dbReference type="SUPFAM" id="SSF109604">
    <property type="entry name" value="HD-domain/PDEase-like"/>
    <property type="match status" value="1"/>
</dbReference>
<dbReference type="PROSITE" id="PS50861">
    <property type="entry name" value="AA_TRNA_LIGASE_II_GLYAB"/>
    <property type="match status" value="1"/>
</dbReference>
<name>SYGB_DECAR</name>
<sequence>MSSKNLLVELFVEELPPKALKKLGEAFSAALANSLKNAGLAPATASITAYASPRRLAAHVTDVAAVAADKPVAQKLMPVAVGLDAAGNATPALLKKLAGLGIDADAAASVVASLRRENDGKADVLFFDSLAKGATLAEGLQKAIEAALAALPIPKVMTYQLQDGWSSVNFVRPAHGLVALHGGDVVPVAVLGLNAGRETHGHRFEATVDPVVFANADEYASKLATDGAVIASFAERRAEIARQLEGAAAKAGQATGAALRPIDDEALLDEVTALVERPNVLIGQFEQEFLAVPQECLILTMKANQKYFPLLDATGKLTNKFLVVSNISPEDASAVIGGNERVVRPRLADAKFFFDQDRKKSLESRVIGLSKVVYHNKLGTQGERMQRVAAIARAIGESLGGEALALHAEQAAVLAKADLLTDMVGEFPELQGTMGRYYALHDGLAAEIADAVEDHYKPRFAGDTLPRGIVGTVVALADKLETLVGMFGIGQIPTGDRDPFALRRHALGVIRMLAENNLALPLDHLLQTAAAPFASVDGFKAAEAPLADFIYDRLAGSLREQGYTAQEVDAVVSQRPQRLGDIPKRLAAVRAFSGLPESAALAAANKRVGNILKKVENAVEAVVDNALLKEAAEIALHDALVEVVPQADAAFVTGDYSESLQALAALRAPVDAFFDDVMVNAEDPALRANRLGLLAKLHAAMNQVADISKLSA</sequence>
<feature type="chain" id="PRO_1000101269" description="Glycine--tRNA ligase beta subunit">
    <location>
        <begin position="1"/>
        <end position="712"/>
    </location>
</feature>
<comment type="catalytic activity">
    <reaction evidence="1">
        <text>tRNA(Gly) + glycine + ATP = glycyl-tRNA(Gly) + AMP + diphosphate</text>
        <dbReference type="Rhea" id="RHEA:16013"/>
        <dbReference type="Rhea" id="RHEA-COMP:9664"/>
        <dbReference type="Rhea" id="RHEA-COMP:9683"/>
        <dbReference type="ChEBI" id="CHEBI:30616"/>
        <dbReference type="ChEBI" id="CHEBI:33019"/>
        <dbReference type="ChEBI" id="CHEBI:57305"/>
        <dbReference type="ChEBI" id="CHEBI:78442"/>
        <dbReference type="ChEBI" id="CHEBI:78522"/>
        <dbReference type="ChEBI" id="CHEBI:456215"/>
        <dbReference type="EC" id="6.1.1.14"/>
    </reaction>
</comment>
<comment type="subunit">
    <text evidence="1">Tetramer of two alpha and two beta subunits.</text>
</comment>
<comment type="subcellular location">
    <subcellularLocation>
        <location evidence="1">Cytoplasm</location>
    </subcellularLocation>
</comment>
<comment type="similarity">
    <text evidence="1">Belongs to the class-II aminoacyl-tRNA synthetase family.</text>
</comment>
<proteinExistence type="inferred from homology"/>
<evidence type="ECO:0000255" key="1">
    <source>
        <dbReference type="HAMAP-Rule" id="MF_00255"/>
    </source>
</evidence>
<protein>
    <recommendedName>
        <fullName evidence="1">Glycine--tRNA ligase beta subunit</fullName>
        <ecNumber evidence="1">6.1.1.14</ecNumber>
    </recommendedName>
    <alternativeName>
        <fullName evidence="1">Glycyl-tRNA synthetase beta subunit</fullName>
        <shortName evidence="1">GlyRS</shortName>
    </alternativeName>
</protein>
<organism>
    <name type="scientific">Dechloromonas aromatica (strain RCB)</name>
    <dbReference type="NCBI Taxonomy" id="159087"/>
    <lineage>
        <taxon>Bacteria</taxon>
        <taxon>Pseudomonadati</taxon>
        <taxon>Pseudomonadota</taxon>
        <taxon>Betaproteobacteria</taxon>
        <taxon>Rhodocyclales</taxon>
        <taxon>Azonexaceae</taxon>
        <taxon>Dechloromonas</taxon>
    </lineage>
</organism>
<accession>Q47A67</accession>
<reference key="1">
    <citation type="journal article" date="2009" name="BMC Genomics">
        <title>Metabolic analysis of the soil microbe Dechloromonas aromatica str. RCB: indications of a surprisingly complex life-style and cryptic anaerobic pathways for aromatic degradation.</title>
        <authorList>
            <person name="Salinero K.K."/>
            <person name="Keller K."/>
            <person name="Feil W.S."/>
            <person name="Feil H."/>
            <person name="Trong S."/>
            <person name="Di Bartolo G."/>
            <person name="Lapidus A."/>
        </authorList>
    </citation>
    <scope>NUCLEOTIDE SEQUENCE [LARGE SCALE GENOMIC DNA]</scope>
    <source>
        <strain>RCB</strain>
    </source>
</reference>
<keyword id="KW-0030">Aminoacyl-tRNA synthetase</keyword>
<keyword id="KW-0067">ATP-binding</keyword>
<keyword id="KW-0963">Cytoplasm</keyword>
<keyword id="KW-0436">Ligase</keyword>
<keyword id="KW-0547">Nucleotide-binding</keyword>
<keyword id="KW-0648">Protein biosynthesis</keyword>